<accession>A3NZ79</accession>
<sequence length="130" mass="14297">MIGNWNYGTGRRKSAVARVFIKAGKGDIVVNGKPISDYFSRETSLMIVRQPLELTNHAQTFDIKVNVSGGGETGQAGAVRHGITRALIDYDATLKPALSNAGFVTRDAREVERKKVGLHKARRAKQFSKR</sequence>
<keyword id="KW-0687">Ribonucleoprotein</keyword>
<keyword id="KW-0689">Ribosomal protein</keyword>
<evidence type="ECO:0000255" key="1">
    <source>
        <dbReference type="HAMAP-Rule" id="MF_00532"/>
    </source>
</evidence>
<evidence type="ECO:0000305" key="2"/>
<comment type="similarity">
    <text evidence="1">Belongs to the universal ribosomal protein uS9 family.</text>
</comment>
<proteinExistence type="inferred from homology"/>
<gene>
    <name evidence="1" type="primary">rpsI</name>
    <name type="ordered locus">BURPS1106A_3413</name>
</gene>
<name>RS9_BURP0</name>
<reference key="1">
    <citation type="journal article" date="2010" name="Genome Biol. Evol.">
        <title>Continuing evolution of Burkholderia mallei through genome reduction and large-scale rearrangements.</title>
        <authorList>
            <person name="Losada L."/>
            <person name="Ronning C.M."/>
            <person name="DeShazer D."/>
            <person name="Woods D."/>
            <person name="Fedorova N."/>
            <person name="Kim H.S."/>
            <person name="Shabalina S.A."/>
            <person name="Pearson T.R."/>
            <person name="Brinkac L."/>
            <person name="Tan P."/>
            <person name="Nandi T."/>
            <person name="Crabtree J."/>
            <person name="Badger J."/>
            <person name="Beckstrom-Sternberg S."/>
            <person name="Saqib M."/>
            <person name="Schutzer S.E."/>
            <person name="Keim P."/>
            <person name="Nierman W.C."/>
        </authorList>
    </citation>
    <scope>NUCLEOTIDE SEQUENCE [LARGE SCALE GENOMIC DNA]</scope>
    <source>
        <strain>1106a</strain>
    </source>
</reference>
<organism>
    <name type="scientific">Burkholderia pseudomallei (strain 1106a)</name>
    <dbReference type="NCBI Taxonomy" id="357348"/>
    <lineage>
        <taxon>Bacteria</taxon>
        <taxon>Pseudomonadati</taxon>
        <taxon>Pseudomonadota</taxon>
        <taxon>Betaproteobacteria</taxon>
        <taxon>Burkholderiales</taxon>
        <taxon>Burkholderiaceae</taxon>
        <taxon>Burkholderia</taxon>
        <taxon>pseudomallei group</taxon>
    </lineage>
</organism>
<protein>
    <recommendedName>
        <fullName evidence="1">Small ribosomal subunit protein uS9</fullName>
    </recommendedName>
    <alternativeName>
        <fullName evidence="2">30S ribosomal protein S9</fullName>
    </alternativeName>
</protein>
<feature type="chain" id="PRO_1000051187" description="Small ribosomal subunit protein uS9">
    <location>
        <begin position="1"/>
        <end position="130"/>
    </location>
</feature>
<dbReference type="EMBL" id="CP000572">
    <property type="protein sequence ID" value="ABN90125.1"/>
    <property type="molecule type" value="Genomic_DNA"/>
</dbReference>
<dbReference type="RefSeq" id="WP_004194309.1">
    <property type="nucleotide sequence ID" value="NC_009076.1"/>
</dbReference>
<dbReference type="SMR" id="A3NZ79"/>
<dbReference type="GeneID" id="93061506"/>
<dbReference type="KEGG" id="bpl:BURPS1106A_3413"/>
<dbReference type="HOGENOM" id="CLU_046483_2_1_4"/>
<dbReference type="Proteomes" id="UP000006738">
    <property type="component" value="Chromosome I"/>
</dbReference>
<dbReference type="GO" id="GO:0022627">
    <property type="term" value="C:cytosolic small ribosomal subunit"/>
    <property type="evidence" value="ECO:0007669"/>
    <property type="project" value="TreeGrafter"/>
</dbReference>
<dbReference type="GO" id="GO:0003723">
    <property type="term" value="F:RNA binding"/>
    <property type="evidence" value="ECO:0007669"/>
    <property type="project" value="TreeGrafter"/>
</dbReference>
<dbReference type="GO" id="GO:0003735">
    <property type="term" value="F:structural constituent of ribosome"/>
    <property type="evidence" value="ECO:0007669"/>
    <property type="project" value="InterPro"/>
</dbReference>
<dbReference type="GO" id="GO:0006412">
    <property type="term" value="P:translation"/>
    <property type="evidence" value="ECO:0007669"/>
    <property type="project" value="UniProtKB-UniRule"/>
</dbReference>
<dbReference type="FunFam" id="3.30.230.10:FF:000001">
    <property type="entry name" value="30S ribosomal protein S9"/>
    <property type="match status" value="1"/>
</dbReference>
<dbReference type="Gene3D" id="3.30.230.10">
    <property type="match status" value="1"/>
</dbReference>
<dbReference type="HAMAP" id="MF_00532_B">
    <property type="entry name" value="Ribosomal_uS9_B"/>
    <property type="match status" value="1"/>
</dbReference>
<dbReference type="InterPro" id="IPR020568">
    <property type="entry name" value="Ribosomal_Su5_D2-typ_SF"/>
</dbReference>
<dbReference type="InterPro" id="IPR000754">
    <property type="entry name" value="Ribosomal_uS9"/>
</dbReference>
<dbReference type="InterPro" id="IPR023035">
    <property type="entry name" value="Ribosomal_uS9_bac/plastid"/>
</dbReference>
<dbReference type="InterPro" id="IPR020574">
    <property type="entry name" value="Ribosomal_uS9_CS"/>
</dbReference>
<dbReference type="InterPro" id="IPR014721">
    <property type="entry name" value="Ribsml_uS5_D2-typ_fold_subgr"/>
</dbReference>
<dbReference type="NCBIfam" id="NF001099">
    <property type="entry name" value="PRK00132.1"/>
    <property type="match status" value="1"/>
</dbReference>
<dbReference type="PANTHER" id="PTHR21569">
    <property type="entry name" value="RIBOSOMAL PROTEIN S9"/>
    <property type="match status" value="1"/>
</dbReference>
<dbReference type="PANTHER" id="PTHR21569:SF1">
    <property type="entry name" value="SMALL RIBOSOMAL SUBUNIT PROTEIN US9M"/>
    <property type="match status" value="1"/>
</dbReference>
<dbReference type="Pfam" id="PF00380">
    <property type="entry name" value="Ribosomal_S9"/>
    <property type="match status" value="1"/>
</dbReference>
<dbReference type="SUPFAM" id="SSF54211">
    <property type="entry name" value="Ribosomal protein S5 domain 2-like"/>
    <property type="match status" value="1"/>
</dbReference>
<dbReference type="PROSITE" id="PS00360">
    <property type="entry name" value="RIBOSOMAL_S9"/>
    <property type="match status" value="1"/>
</dbReference>